<keyword id="KW-0143">Chaperone</keyword>
<keyword id="KW-0496">Mitochondrion</keyword>
<keyword id="KW-0809">Transit peptide</keyword>
<evidence type="ECO:0000250" key="1">
    <source>
        <dbReference type="UniProtKB" id="Q08230"/>
    </source>
</evidence>
<evidence type="ECO:0000255" key="2">
    <source>
        <dbReference type="HAMAP-Rule" id="MF_03057"/>
    </source>
</evidence>
<name>SDHF2_YEAS1</name>
<protein>
    <recommendedName>
        <fullName evidence="2">Succinate dehydrogenase assembly factor 2, mitochondrial</fullName>
        <shortName evidence="2">SDH assembly factor 2</shortName>
        <shortName evidence="2">SDHAF2</shortName>
    </recommendedName>
</protein>
<reference key="1">
    <citation type="submission" date="2005-03" db="EMBL/GenBank/DDBJ databases">
        <title>Annotation of the Saccharomyces cerevisiae RM11-1a genome.</title>
        <authorList>
            <consortium name="The Broad Institute Genome Sequencing Platform"/>
            <person name="Birren B.W."/>
            <person name="Lander E.S."/>
            <person name="Galagan J.E."/>
            <person name="Nusbaum C."/>
            <person name="Devon K."/>
            <person name="Cuomo C."/>
            <person name="Jaffe D.B."/>
            <person name="Butler J."/>
            <person name="Alvarez P."/>
            <person name="Gnerre S."/>
            <person name="Grabherr M."/>
            <person name="Kleber M."/>
            <person name="Mauceli E.W."/>
            <person name="Brockman W."/>
            <person name="MacCallum I.A."/>
            <person name="Rounsley S."/>
            <person name="Young S.K."/>
            <person name="LaButti K."/>
            <person name="Pushparaj V."/>
            <person name="DeCaprio D."/>
            <person name="Crawford M."/>
            <person name="Koehrsen M."/>
            <person name="Engels R."/>
            <person name="Montgomery P."/>
            <person name="Pearson M."/>
            <person name="Howarth C."/>
            <person name="Larson L."/>
            <person name="Luoma S."/>
            <person name="White J."/>
            <person name="O'Leary S."/>
            <person name="Kodira C.D."/>
            <person name="Zeng Q."/>
            <person name="Yandava C."/>
            <person name="Alvarado L."/>
            <person name="Pratt S."/>
            <person name="Kruglyak L."/>
        </authorList>
    </citation>
    <scope>NUCLEOTIDE SEQUENCE [LARGE SCALE GENOMIC DNA]</scope>
    <source>
        <strain>RM11-1a</strain>
    </source>
</reference>
<dbReference type="EMBL" id="CH408045">
    <property type="protein sequence ID" value="EDV10542.1"/>
    <property type="molecule type" value="Genomic_DNA"/>
</dbReference>
<dbReference type="BMRB" id="B3LIY9"/>
<dbReference type="SMR" id="B3LIY9"/>
<dbReference type="HOGENOM" id="CLU_103054_0_1_1"/>
<dbReference type="OrthoDB" id="32895at4893"/>
<dbReference type="Proteomes" id="UP000008335">
    <property type="component" value="Unassembled WGS sequence"/>
</dbReference>
<dbReference type="GO" id="GO:0005759">
    <property type="term" value="C:mitochondrial matrix"/>
    <property type="evidence" value="ECO:0000250"/>
    <property type="project" value="UniProtKB"/>
</dbReference>
<dbReference type="GO" id="GO:0006121">
    <property type="term" value="P:mitochondrial electron transport, succinate to ubiquinone"/>
    <property type="evidence" value="ECO:0000250"/>
    <property type="project" value="UniProtKB"/>
</dbReference>
<dbReference type="GO" id="GO:0034553">
    <property type="term" value="P:mitochondrial respiratory chain complex II assembly"/>
    <property type="evidence" value="ECO:0007669"/>
    <property type="project" value="TreeGrafter"/>
</dbReference>
<dbReference type="GO" id="GO:0018293">
    <property type="term" value="P:protein-FAD linkage"/>
    <property type="evidence" value="ECO:0000250"/>
    <property type="project" value="UniProtKB"/>
</dbReference>
<dbReference type="GO" id="GO:0006099">
    <property type="term" value="P:tricarboxylic acid cycle"/>
    <property type="evidence" value="ECO:0007669"/>
    <property type="project" value="TreeGrafter"/>
</dbReference>
<dbReference type="FunFam" id="1.10.150.250:FF:000002">
    <property type="entry name" value="Succinate dehydrogenase assembly factor 2, mitochondrial"/>
    <property type="match status" value="1"/>
</dbReference>
<dbReference type="Gene3D" id="1.10.150.250">
    <property type="entry name" value="Flavinator of succinate dehydrogenase"/>
    <property type="match status" value="1"/>
</dbReference>
<dbReference type="HAMAP" id="MF_03057">
    <property type="entry name" value="SDHAF2"/>
    <property type="match status" value="1"/>
</dbReference>
<dbReference type="InterPro" id="IPR005631">
    <property type="entry name" value="SDH"/>
</dbReference>
<dbReference type="InterPro" id="IPR036714">
    <property type="entry name" value="SDH_sf"/>
</dbReference>
<dbReference type="InterPro" id="IPR028882">
    <property type="entry name" value="SDHAF2"/>
</dbReference>
<dbReference type="PANTHER" id="PTHR12469">
    <property type="entry name" value="PROTEIN EMI5 HOMOLOG, MITOCHONDRIAL"/>
    <property type="match status" value="1"/>
</dbReference>
<dbReference type="PANTHER" id="PTHR12469:SF2">
    <property type="entry name" value="SUCCINATE DEHYDROGENASE ASSEMBLY FACTOR 2, MITOCHONDRIAL"/>
    <property type="match status" value="1"/>
</dbReference>
<dbReference type="Pfam" id="PF03937">
    <property type="entry name" value="Sdh5"/>
    <property type="match status" value="1"/>
</dbReference>
<dbReference type="SUPFAM" id="SSF109910">
    <property type="entry name" value="YgfY-like"/>
    <property type="match status" value="1"/>
</dbReference>
<proteinExistence type="inferred from homology"/>
<feature type="transit peptide" description="Mitochondrion" evidence="1">
    <location>
        <begin position="1"/>
        <end position="35"/>
    </location>
</feature>
<feature type="chain" id="PRO_0000383201" description="Succinate dehydrogenase assembly factor 2, mitochondrial">
    <location>
        <begin position="36"/>
        <end position="162"/>
    </location>
</feature>
<organism>
    <name type="scientific">Saccharomyces cerevisiae (strain RM11-1a)</name>
    <name type="common">Baker's yeast</name>
    <dbReference type="NCBI Taxonomy" id="285006"/>
    <lineage>
        <taxon>Eukaryota</taxon>
        <taxon>Fungi</taxon>
        <taxon>Dikarya</taxon>
        <taxon>Ascomycota</taxon>
        <taxon>Saccharomycotina</taxon>
        <taxon>Saccharomycetes</taxon>
        <taxon>Saccharomycetales</taxon>
        <taxon>Saccharomycetaceae</taxon>
        <taxon>Saccharomyces</taxon>
    </lineage>
</organism>
<gene>
    <name evidence="2" type="primary">SDH5</name>
    <name type="ORF">SCRG_01332</name>
</gene>
<comment type="function">
    <text evidence="2">Plays an essential role in the assembly of succinate dehydrogenase (SDH), an enzyme complex (also referred to as respiratory complex II) that is a component of both the tricarboxylic acid (TCA) cycle and the mitochondrial electron transport chain, and which couples the oxidation of succinate to fumarate with the reduction of ubiquinone (coenzyme Q) to ubiquinol. Required for flavinylation (covalent attachment of FAD) of the flavoprotein subunit of the SDH catalytic dimer.</text>
</comment>
<comment type="subunit">
    <text evidence="2">Interacts with the flavoprotein subunit within the SDH catalytic dimer.</text>
</comment>
<comment type="subcellular location">
    <subcellularLocation>
        <location evidence="2">Mitochondrion matrix</location>
    </subcellularLocation>
</comment>
<comment type="similarity">
    <text evidence="2">Belongs to the SDHAF2 family.</text>
</comment>
<sequence length="162" mass="19058">MHNMFPALTKTLSLQGYKIINSQTGSAAWSCGRRWFSSDKDDHDDVVTRIKISPIKRTNEPLDKKRARLIYQSRKRGILETDLLLSGFAAKYLKKMNEEELEEYDSLLNELDWDIYYWATKNFKTSPLPDKWANSKLLKQLQEFSENKEKEILSMPDLSKYQ</sequence>
<accession>B3LIY9</accession>